<gene>
    <name evidence="4" type="primary">AQP9</name>
    <name type="ORF">BCIN_09g04250</name>
</gene>
<sequence>MEGGLRSPLNRAVRMAKYLLDSCIGMLPYPKQRCESFNVVDLLSTCSFYKAVSLKNLKLHIEQHPSFANPSLSHISKFAFTELPFHAFTFSIPKMSLDKQESPIPIVSNDKNIGIFESQNSSPNLSSHESTLDGNNMHTVSSEGSGAYAEHGPGIDHKIPQELEIQSKPDLLWSRVRHTMREPFSEFFGVFILILFGDGVVAQVVLSSGERGSYQSISWGWGIGVMLGVYASGVSGAHINPAVTFANCIFRKFPWRKFPIYMLAQVLGAMCASGVVYANYKSAIDMFEGGNNIRTVGLNTSSAGIFCTYPAPFMTKTGQFFSEFVASTILMFCIYALQDNGNLGSGNLTPLGLFFVIFGIGACFGWETGYAINLARDFGPRLMSYFLGYGHEVWSAGNYYFWVPMVAPFIGCLFGGWLYDVFIFTGESPINTPWMGLKRLMPGGLGSKKVDSKV</sequence>
<feature type="chain" id="PRO_0000457447" description="Aquaglyceroporin-9">
    <location>
        <begin position="1"/>
        <end position="454"/>
    </location>
</feature>
<feature type="topological domain" description="Cytoplasmic" evidence="5">
    <location>
        <begin position="1"/>
        <end position="186"/>
    </location>
</feature>
<feature type="transmembrane region" description="Helical" evidence="1">
    <location>
        <begin position="187"/>
        <end position="207"/>
    </location>
</feature>
<feature type="topological domain" description="Extracellular" evidence="5">
    <location>
        <begin position="208"/>
        <end position="216"/>
    </location>
</feature>
<feature type="transmembrane region" description="Helical" evidence="1">
    <location>
        <begin position="217"/>
        <end position="237"/>
    </location>
</feature>
<feature type="topological domain" description="Cytoplasmic" evidence="5">
    <location>
        <begin position="238"/>
        <end position="257"/>
    </location>
</feature>
<feature type="transmembrane region" description="Helical" evidence="1">
    <location>
        <begin position="258"/>
        <end position="278"/>
    </location>
</feature>
<feature type="topological domain" description="Extracellular" evidence="5">
    <location>
        <begin position="279"/>
        <end position="316"/>
    </location>
</feature>
<feature type="transmembrane region" description="Helical" evidence="1">
    <location>
        <begin position="317"/>
        <end position="337"/>
    </location>
</feature>
<feature type="topological domain" description="Cytoplasmic" evidence="5">
    <location>
        <begin position="338"/>
        <end position="351"/>
    </location>
</feature>
<feature type="transmembrane region" description="Helical" evidence="1">
    <location>
        <begin position="352"/>
        <end position="372"/>
    </location>
</feature>
<feature type="topological domain" description="Extracellular" evidence="5">
    <location>
        <begin position="373"/>
        <end position="403"/>
    </location>
</feature>
<feature type="transmembrane region" description="Helical" evidence="1">
    <location>
        <begin position="404"/>
        <end position="424"/>
    </location>
</feature>
<feature type="topological domain" description="Cytoplasmic" evidence="5">
    <location>
        <begin position="425"/>
        <end position="454"/>
    </location>
</feature>
<feature type="short sequence motif" description="NPA 1" evidence="6">
    <location>
        <begin position="240"/>
        <end position="242"/>
    </location>
</feature>
<feature type="short sequence motif" description="NPA 2" evidence="6">
    <location>
        <begin position="373"/>
        <end position="375"/>
    </location>
</feature>
<feature type="glycosylation site" description="N-linked (GlcNAc...) asparagine" evidence="2">
    <location>
        <position position="299"/>
    </location>
</feature>
<reference key="1">
    <citation type="journal article" date="2011" name="PLoS Genet.">
        <title>Genomic analysis of the necrotrophic fungal pathogens Sclerotinia sclerotiorum and Botrytis cinerea.</title>
        <authorList>
            <person name="Amselem J."/>
            <person name="Cuomo C.A."/>
            <person name="van Kan J.A.L."/>
            <person name="Viaud M."/>
            <person name="Benito E.P."/>
            <person name="Couloux A."/>
            <person name="Coutinho P.M."/>
            <person name="de Vries R.P."/>
            <person name="Dyer P.S."/>
            <person name="Fillinger S."/>
            <person name="Fournier E."/>
            <person name="Gout L."/>
            <person name="Hahn M."/>
            <person name="Kohn L."/>
            <person name="Lapalu N."/>
            <person name="Plummer K.M."/>
            <person name="Pradier J.-M."/>
            <person name="Quevillon E."/>
            <person name="Sharon A."/>
            <person name="Simon A."/>
            <person name="ten Have A."/>
            <person name="Tudzynski B."/>
            <person name="Tudzynski P."/>
            <person name="Wincker P."/>
            <person name="Andrew M."/>
            <person name="Anthouard V."/>
            <person name="Beever R.E."/>
            <person name="Beffa R."/>
            <person name="Benoit I."/>
            <person name="Bouzid O."/>
            <person name="Brault B."/>
            <person name="Chen Z."/>
            <person name="Choquer M."/>
            <person name="Collemare J."/>
            <person name="Cotton P."/>
            <person name="Danchin E.G."/>
            <person name="Da Silva C."/>
            <person name="Gautier A."/>
            <person name="Giraud C."/>
            <person name="Giraud T."/>
            <person name="Gonzalez C."/>
            <person name="Grossetete S."/>
            <person name="Gueldener U."/>
            <person name="Henrissat B."/>
            <person name="Howlett B.J."/>
            <person name="Kodira C."/>
            <person name="Kretschmer M."/>
            <person name="Lappartient A."/>
            <person name="Leroch M."/>
            <person name="Levis C."/>
            <person name="Mauceli E."/>
            <person name="Neuveglise C."/>
            <person name="Oeser B."/>
            <person name="Pearson M."/>
            <person name="Poulain J."/>
            <person name="Poussereau N."/>
            <person name="Quesneville H."/>
            <person name="Rascle C."/>
            <person name="Schumacher J."/>
            <person name="Segurens B."/>
            <person name="Sexton A."/>
            <person name="Silva E."/>
            <person name="Sirven C."/>
            <person name="Soanes D.M."/>
            <person name="Talbot N.J."/>
            <person name="Templeton M."/>
            <person name="Yandava C."/>
            <person name="Yarden O."/>
            <person name="Zeng Q."/>
            <person name="Rollins J.A."/>
            <person name="Lebrun M.-H."/>
            <person name="Dickman M."/>
        </authorList>
    </citation>
    <scope>NUCLEOTIDE SEQUENCE [LARGE SCALE GENOMIC DNA]</scope>
    <source>
        <strain>B05.10</strain>
    </source>
</reference>
<reference key="2">
    <citation type="journal article" date="2012" name="Eukaryot. Cell">
        <title>Genome update of Botrytis cinerea strains B05.10 and T4.</title>
        <authorList>
            <person name="Staats M."/>
            <person name="van Kan J.A.L."/>
        </authorList>
    </citation>
    <scope>NUCLEOTIDE SEQUENCE [LARGE SCALE GENOMIC DNA]</scope>
    <source>
        <strain>B05.10</strain>
    </source>
</reference>
<reference key="3">
    <citation type="journal article" date="2017" name="Mol. Plant Pathol.">
        <title>A gapless genome sequence of the fungus Botrytis cinerea.</title>
        <authorList>
            <person name="van Kan J.A.L."/>
            <person name="Stassen J.H.M."/>
            <person name="Mosbach A."/>
            <person name="van der Lee T.A.J."/>
            <person name="Faino L."/>
            <person name="Farmer A.D."/>
            <person name="Papasotiriou D.G."/>
            <person name="Zhou S."/>
            <person name="Seidl M.F."/>
            <person name="Cottam E."/>
            <person name="Edel D."/>
            <person name="Hahn M."/>
            <person name="Schwartz D.C."/>
            <person name="Dietrich R.A."/>
            <person name="Widdison S."/>
            <person name="Scalliet G."/>
        </authorList>
    </citation>
    <scope>NUCLEOTIDE SEQUENCE [LARGE SCALE GENOMIC DNA]</scope>
    <source>
        <strain>B05.10</strain>
    </source>
</reference>
<reference key="4">
    <citation type="journal article" date="2016" name="New Phytol.">
        <title>Aquaporin8 regulates cellular development and reactive oxygen species production, a critical component of virulence in Botrytis cinerea.</title>
        <authorList>
            <person name="An B."/>
            <person name="Li B."/>
            <person name="Li H."/>
            <person name="Zhang Z."/>
            <person name="Qin G."/>
            <person name="Tian S."/>
        </authorList>
    </citation>
    <scope>FUNCTION</scope>
    <scope>DOMAIN</scope>
    <scope>INDUCTION</scope>
    <scope>DISRUPTION PHENOTYPE</scope>
</reference>
<organism>
    <name type="scientific">Botryotinia fuckeliana (strain B05.10)</name>
    <name type="common">Noble rot fungus</name>
    <name type="synonym">Botrytis cinerea</name>
    <dbReference type="NCBI Taxonomy" id="332648"/>
    <lineage>
        <taxon>Eukaryota</taxon>
        <taxon>Fungi</taxon>
        <taxon>Dikarya</taxon>
        <taxon>Ascomycota</taxon>
        <taxon>Pezizomycotina</taxon>
        <taxon>Leotiomycetes</taxon>
        <taxon>Helotiales</taxon>
        <taxon>Sclerotiniaceae</taxon>
        <taxon>Botrytis</taxon>
    </lineage>
</organism>
<accession>A0A384JSZ0</accession>
<accession>A0A384JSN2</accession>
<accession>A0A384JSP1</accession>
<accession>A0A384JSP7</accession>
<accession>A0A384JSQ3</accession>
<accession>A0A384JSQ7</accession>
<accession>A0A384JST5</accession>
<accession>A0A384JSU4</accession>
<accession>A0A384JSV7</accession>
<accession>A0A384JSZ9</accession>
<accession>A0A384JT88</accession>
<accession>A0A384JTB6</accession>
<accession>A0A384JTC6</accession>
<keyword id="KW-0325">Glycoprotein</keyword>
<keyword id="KW-0472">Membrane</keyword>
<keyword id="KW-1185">Reference proteome</keyword>
<keyword id="KW-0677">Repeat</keyword>
<keyword id="KW-0812">Transmembrane</keyword>
<keyword id="KW-1133">Transmembrane helix</keyword>
<keyword id="KW-0813">Transport</keyword>
<dbReference type="EMBL" id="CP009813">
    <property type="protein sequence ID" value="ATZ53612.1"/>
    <property type="molecule type" value="Genomic_DNA"/>
</dbReference>
<dbReference type="EMBL" id="CP009813">
    <property type="protein sequence ID" value="ATZ53602.1"/>
    <property type="status" value="ALT_SEQ"/>
    <property type="molecule type" value="Genomic_DNA"/>
</dbReference>
<dbReference type="EMBL" id="CP009813">
    <property type="protein sequence ID" value="ATZ53603.1"/>
    <property type="status" value="ALT_SEQ"/>
    <property type="molecule type" value="Genomic_DNA"/>
</dbReference>
<dbReference type="EMBL" id="CP009813">
    <property type="protein sequence ID" value="ATZ53604.1"/>
    <property type="status" value="ALT_SEQ"/>
    <property type="molecule type" value="Genomic_DNA"/>
</dbReference>
<dbReference type="EMBL" id="CP009813">
    <property type="protein sequence ID" value="ATZ53605.1"/>
    <property type="status" value="ALT_SEQ"/>
    <property type="molecule type" value="Genomic_DNA"/>
</dbReference>
<dbReference type="EMBL" id="CP009813">
    <property type="protein sequence ID" value="ATZ53606.1"/>
    <property type="status" value="ALT_SEQ"/>
    <property type="molecule type" value="Genomic_DNA"/>
</dbReference>
<dbReference type="EMBL" id="CP009813">
    <property type="protein sequence ID" value="ATZ53607.1"/>
    <property type="status" value="ALT_SEQ"/>
    <property type="molecule type" value="Genomic_DNA"/>
</dbReference>
<dbReference type="EMBL" id="CP009813">
    <property type="protein sequence ID" value="ATZ53608.1"/>
    <property type="status" value="ALT_SEQ"/>
    <property type="molecule type" value="Genomic_DNA"/>
</dbReference>
<dbReference type="EMBL" id="CP009813">
    <property type="protein sequence ID" value="ATZ53609.1"/>
    <property type="status" value="ALT_SEQ"/>
    <property type="molecule type" value="Genomic_DNA"/>
</dbReference>
<dbReference type="EMBL" id="CP009813">
    <property type="protein sequence ID" value="ATZ53610.1"/>
    <property type="status" value="ALT_SEQ"/>
    <property type="molecule type" value="Genomic_DNA"/>
</dbReference>
<dbReference type="EMBL" id="CP009813">
    <property type="protein sequence ID" value="ATZ53611.1"/>
    <property type="status" value="ALT_SEQ"/>
    <property type="molecule type" value="Genomic_DNA"/>
</dbReference>
<dbReference type="EMBL" id="CP009813">
    <property type="protein sequence ID" value="ATZ53613.1"/>
    <property type="status" value="ALT_SEQ"/>
    <property type="molecule type" value="Genomic_DNA"/>
</dbReference>
<dbReference type="EMBL" id="CP009813">
    <property type="protein sequence ID" value="ATZ53614.1"/>
    <property type="status" value="ALT_SEQ"/>
    <property type="molecule type" value="Genomic_DNA"/>
</dbReference>
<dbReference type="EMBL" id="CP009813">
    <property type="protein sequence ID" value="ATZ53615.1"/>
    <property type="status" value="ALT_SEQ"/>
    <property type="molecule type" value="Genomic_DNA"/>
</dbReference>
<dbReference type="SMR" id="A0A384JSZ0"/>
<dbReference type="EnsemblFungi" id="Bcin09g04250.1">
    <property type="protein sequence ID" value="Bcin09p04250.1"/>
    <property type="gene ID" value="Bcin09g04250"/>
</dbReference>
<dbReference type="EnsemblFungi" id="Bcin09g04250.10">
    <property type="protein sequence ID" value="Bcin09p04250.10"/>
    <property type="gene ID" value="Bcin09g04250"/>
</dbReference>
<dbReference type="EnsemblFungi" id="Bcin09g04250.11">
    <property type="protein sequence ID" value="Bcin09p04250.11"/>
    <property type="gene ID" value="Bcin09g04250"/>
</dbReference>
<dbReference type="EnsemblFungi" id="Bcin09g04250.12">
    <property type="protein sequence ID" value="Bcin09p04250.12"/>
    <property type="gene ID" value="Bcin09g04250"/>
</dbReference>
<dbReference type="EnsemblFungi" id="Bcin09g04250.13">
    <property type="protein sequence ID" value="Bcin09p04250.13"/>
    <property type="gene ID" value="Bcin09g04250"/>
</dbReference>
<dbReference type="EnsemblFungi" id="Bcin09g04250.14">
    <property type="protein sequence ID" value="Bcin09p04250.14"/>
    <property type="gene ID" value="Bcin09g04250"/>
</dbReference>
<dbReference type="EnsemblFungi" id="Bcin09g04250.2">
    <property type="protein sequence ID" value="Bcin09p04250.2"/>
    <property type="gene ID" value="Bcin09g04250"/>
</dbReference>
<dbReference type="EnsemblFungi" id="Bcin09g04250.3">
    <property type="protein sequence ID" value="Bcin09p04250.3"/>
    <property type="gene ID" value="Bcin09g04250"/>
</dbReference>
<dbReference type="EnsemblFungi" id="Bcin09g04250.4">
    <property type="protein sequence ID" value="Bcin09p04250.4"/>
    <property type="gene ID" value="Bcin09g04250"/>
</dbReference>
<dbReference type="EnsemblFungi" id="Bcin09g04250.5">
    <property type="protein sequence ID" value="Bcin09p04250.5"/>
    <property type="gene ID" value="Bcin09g04250"/>
</dbReference>
<dbReference type="EnsemblFungi" id="Bcin09g04250.6">
    <property type="protein sequence ID" value="Bcin09p04250.6"/>
    <property type="gene ID" value="Bcin09g04250"/>
</dbReference>
<dbReference type="EnsemblFungi" id="Bcin09g04250.7">
    <property type="protein sequence ID" value="Bcin09p04250.7"/>
    <property type="gene ID" value="Bcin09g04250"/>
</dbReference>
<dbReference type="EnsemblFungi" id="Bcin09g04250.8">
    <property type="protein sequence ID" value="Bcin09p04250.8"/>
    <property type="gene ID" value="Bcin09g04250"/>
</dbReference>
<dbReference type="EnsemblFungi" id="Bcin09g04250.9">
    <property type="protein sequence ID" value="Bcin09p04250.9"/>
    <property type="gene ID" value="Bcin09g04250"/>
</dbReference>
<dbReference type="VEuPathDB" id="FungiDB:Bcin09g04250"/>
<dbReference type="OrthoDB" id="3222at2759"/>
<dbReference type="Proteomes" id="UP000001798">
    <property type="component" value="Chromosome bcin09"/>
</dbReference>
<dbReference type="GO" id="GO:0005886">
    <property type="term" value="C:plasma membrane"/>
    <property type="evidence" value="ECO:0007669"/>
    <property type="project" value="TreeGrafter"/>
</dbReference>
<dbReference type="GO" id="GO:0015254">
    <property type="term" value="F:glycerol channel activity"/>
    <property type="evidence" value="ECO:0007669"/>
    <property type="project" value="TreeGrafter"/>
</dbReference>
<dbReference type="GO" id="GO:0015250">
    <property type="term" value="F:water channel activity"/>
    <property type="evidence" value="ECO:0007669"/>
    <property type="project" value="TreeGrafter"/>
</dbReference>
<dbReference type="CDD" id="cd00333">
    <property type="entry name" value="MIP"/>
    <property type="match status" value="1"/>
</dbReference>
<dbReference type="FunFam" id="1.20.1080.10:FF:000027">
    <property type="entry name" value="MIP aquaporin"/>
    <property type="match status" value="1"/>
</dbReference>
<dbReference type="Gene3D" id="1.20.1080.10">
    <property type="entry name" value="Glycerol uptake facilitator protein"/>
    <property type="match status" value="1"/>
</dbReference>
<dbReference type="InterPro" id="IPR023271">
    <property type="entry name" value="Aquaporin-like"/>
</dbReference>
<dbReference type="InterPro" id="IPR000425">
    <property type="entry name" value="MIP"/>
</dbReference>
<dbReference type="InterPro" id="IPR050363">
    <property type="entry name" value="MIP/Aquaporin"/>
</dbReference>
<dbReference type="InterPro" id="IPR022357">
    <property type="entry name" value="MIP_CS"/>
</dbReference>
<dbReference type="NCBIfam" id="TIGR00861">
    <property type="entry name" value="MIP"/>
    <property type="match status" value="1"/>
</dbReference>
<dbReference type="PANTHER" id="PTHR43829">
    <property type="entry name" value="AQUAPORIN OR AQUAGLYCEROPORIN RELATED"/>
    <property type="match status" value="1"/>
</dbReference>
<dbReference type="PANTHER" id="PTHR43829:SF9">
    <property type="entry name" value="AQUAPORIN-9"/>
    <property type="match status" value="1"/>
</dbReference>
<dbReference type="Pfam" id="PF00230">
    <property type="entry name" value="MIP"/>
    <property type="match status" value="1"/>
</dbReference>
<dbReference type="PRINTS" id="PR00783">
    <property type="entry name" value="MINTRINSICP"/>
</dbReference>
<dbReference type="SUPFAM" id="SSF81338">
    <property type="entry name" value="Aquaporin-like"/>
    <property type="match status" value="1"/>
</dbReference>
<dbReference type="PROSITE" id="PS00221">
    <property type="entry name" value="MIP"/>
    <property type="match status" value="1"/>
</dbReference>
<evidence type="ECO:0000255" key="1"/>
<evidence type="ECO:0000255" key="2">
    <source>
        <dbReference type="PROSITE-ProRule" id="PRU00498"/>
    </source>
</evidence>
<evidence type="ECO:0000269" key="3">
    <source>
    </source>
</evidence>
<evidence type="ECO:0000303" key="4">
    <source>
    </source>
</evidence>
<evidence type="ECO:0000305" key="5"/>
<evidence type="ECO:0000305" key="6">
    <source>
    </source>
</evidence>
<name>AQP9_BOTFB</name>
<comment type="function">
    <text evidence="3 6">Water channel required to facilitate the transport of water across membranes (Probable). May play a role in the vegetative growth and pathogenicity (PubMed:26527167).</text>
</comment>
<comment type="catalytic activity">
    <reaction evidence="6">
        <text>H2O(in) = H2O(out)</text>
        <dbReference type="Rhea" id="RHEA:29667"/>
        <dbReference type="ChEBI" id="CHEBI:15377"/>
    </reaction>
</comment>
<comment type="catalytic activity">
    <reaction evidence="6">
        <text>glycerol(in) = glycerol(out)</text>
        <dbReference type="Rhea" id="RHEA:29675"/>
        <dbReference type="ChEBI" id="CHEBI:17754"/>
    </reaction>
</comment>
<comment type="subcellular location">
    <subcellularLocation>
        <location evidence="1">Membrane</location>
        <topology evidence="1">Multi-pass membrane protein</topology>
    </subcellularLocation>
</comment>
<comment type="induction">
    <text evidence="3">Expression is higher in vegetative hyphae than in conidia and infection structures.</text>
</comment>
<comment type="domain">
    <text evidence="6">Aquaporins contain two tandem repeats each containing three membrane-spanning domains and a pore-forming loop with the signature motif Asn-Pro-Ala (NPA) (Probable). AQP9 has NPA/NLA motifs which is in accordance with the fungal aquaporins (NPx and NxA) (Probable).</text>
</comment>
<comment type="disruption phenotype">
    <text evidence="3">Leads 28% reduction in the vegetative growth rate but does not affect conidiation (PubMed:26527167). Also leads to significantly reduced lesion development on tomato leaves (PubMed:26527167).</text>
</comment>
<comment type="similarity">
    <text evidence="5">Belongs to the MIP/aquaporin (TC 1.A.8) family.</text>
</comment>
<comment type="sequence caution" evidence="5">
    <conflict type="erroneous gene model prediction">
        <sequence resource="EMBL-CDS" id="ATZ53602"/>
    </conflict>
</comment>
<comment type="sequence caution" evidence="5">
    <conflict type="erroneous gene model prediction">
        <sequence resource="EMBL-CDS" id="ATZ53603"/>
    </conflict>
</comment>
<comment type="sequence caution" evidence="5">
    <conflict type="erroneous gene model prediction">
        <sequence resource="EMBL-CDS" id="ATZ53604"/>
    </conflict>
</comment>
<comment type="sequence caution" evidence="5">
    <conflict type="erroneous gene model prediction">
        <sequence resource="EMBL-CDS" id="ATZ53605"/>
    </conflict>
</comment>
<comment type="sequence caution" evidence="5">
    <conflict type="erroneous gene model prediction">
        <sequence resource="EMBL-CDS" id="ATZ53606"/>
    </conflict>
</comment>
<comment type="sequence caution" evidence="5">
    <conflict type="erroneous gene model prediction">
        <sequence resource="EMBL-CDS" id="ATZ53607"/>
    </conflict>
</comment>
<comment type="sequence caution" evidence="5">
    <conflict type="erroneous gene model prediction">
        <sequence resource="EMBL-CDS" id="ATZ53608"/>
    </conflict>
</comment>
<comment type="sequence caution" evidence="5">
    <conflict type="erroneous gene model prediction">
        <sequence resource="EMBL-CDS" id="ATZ53609"/>
    </conflict>
</comment>
<comment type="sequence caution" evidence="5">
    <conflict type="erroneous gene model prediction">
        <sequence resource="EMBL-CDS" id="ATZ53610"/>
    </conflict>
</comment>
<comment type="sequence caution" evidence="5">
    <conflict type="erroneous gene model prediction">
        <sequence resource="EMBL-CDS" id="ATZ53611"/>
    </conflict>
</comment>
<comment type="sequence caution" evidence="5">
    <conflict type="erroneous gene model prediction">
        <sequence resource="EMBL-CDS" id="ATZ53613"/>
    </conflict>
</comment>
<comment type="sequence caution" evidence="5">
    <conflict type="erroneous gene model prediction">
        <sequence resource="EMBL-CDS" id="ATZ53614"/>
    </conflict>
</comment>
<comment type="sequence caution" evidence="5">
    <conflict type="erroneous gene model prediction">
        <sequence resource="EMBL-CDS" id="ATZ53615"/>
    </conflict>
</comment>
<proteinExistence type="evidence at transcript level"/>
<protein>
    <recommendedName>
        <fullName evidence="4">Aquaglyceroporin-9</fullName>
    </recommendedName>
</protein>